<evidence type="ECO:0000255" key="1">
    <source>
        <dbReference type="HAMAP-Rule" id="MF_01328"/>
    </source>
</evidence>
<evidence type="ECO:0000256" key="2">
    <source>
        <dbReference type="SAM" id="MobiDB-lite"/>
    </source>
</evidence>
<evidence type="ECO:0000305" key="3"/>
<feature type="chain" id="PRO_0000242418" description="Large ribosomal subunit protein uL4">
    <location>
        <begin position="1"/>
        <end position="200"/>
    </location>
</feature>
<feature type="region of interest" description="Disordered" evidence="2">
    <location>
        <begin position="38"/>
        <end position="68"/>
    </location>
</feature>
<feature type="compositionally biased region" description="Basic residues" evidence="2">
    <location>
        <begin position="54"/>
        <end position="65"/>
    </location>
</feature>
<protein>
    <recommendedName>
        <fullName evidence="1">Large ribosomal subunit protein uL4</fullName>
    </recommendedName>
    <alternativeName>
        <fullName evidence="3">50S ribosomal protein L4</fullName>
    </alternativeName>
</protein>
<organism>
    <name type="scientific">Pseudomonas savastanoi pv. phaseolicola (strain 1448A / Race 6)</name>
    <name type="common">Pseudomonas syringae pv. phaseolicola (strain 1448A / Race 6)</name>
    <dbReference type="NCBI Taxonomy" id="264730"/>
    <lineage>
        <taxon>Bacteria</taxon>
        <taxon>Pseudomonadati</taxon>
        <taxon>Pseudomonadota</taxon>
        <taxon>Gammaproteobacteria</taxon>
        <taxon>Pseudomonadales</taxon>
        <taxon>Pseudomonadaceae</taxon>
        <taxon>Pseudomonas</taxon>
    </lineage>
</organism>
<comment type="function">
    <text evidence="1">One of the primary rRNA binding proteins, this protein initially binds near the 5'-end of the 23S rRNA. It is important during the early stages of 50S assembly. It makes multiple contacts with different domains of the 23S rRNA in the assembled 50S subunit and ribosome.</text>
</comment>
<comment type="function">
    <text evidence="1">Forms part of the polypeptide exit tunnel.</text>
</comment>
<comment type="subunit">
    <text evidence="1">Part of the 50S ribosomal subunit.</text>
</comment>
<comment type="similarity">
    <text evidence="1">Belongs to the universal ribosomal protein uL4 family.</text>
</comment>
<dbReference type="EMBL" id="CP000058">
    <property type="protein sequence ID" value="AAZ36455.1"/>
    <property type="molecule type" value="Genomic_DNA"/>
</dbReference>
<dbReference type="RefSeq" id="WP_004658289.1">
    <property type="nucleotide sequence ID" value="NC_005773.3"/>
</dbReference>
<dbReference type="SMR" id="Q48D37"/>
<dbReference type="KEGG" id="psp:PSPPH_4591"/>
<dbReference type="eggNOG" id="COG0088">
    <property type="taxonomic scope" value="Bacteria"/>
</dbReference>
<dbReference type="HOGENOM" id="CLU_041575_5_2_6"/>
<dbReference type="Proteomes" id="UP000000551">
    <property type="component" value="Chromosome"/>
</dbReference>
<dbReference type="GO" id="GO:1990904">
    <property type="term" value="C:ribonucleoprotein complex"/>
    <property type="evidence" value="ECO:0007669"/>
    <property type="project" value="UniProtKB-KW"/>
</dbReference>
<dbReference type="GO" id="GO:0005840">
    <property type="term" value="C:ribosome"/>
    <property type="evidence" value="ECO:0007669"/>
    <property type="project" value="UniProtKB-KW"/>
</dbReference>
<dbReference type="GO" id="GO:0019843">
    <property type="term" value="F:rRNA binding"/>
    <property type="evidence" value="ECO:0007669"/>
    <property type="project" value="UniProtKB-UniRule"/>
</dbReference>
<dbReference type="GO" id="GO:0003735">
    <property type="term" value="F:structural constituent of ribosome"/>
    <property type="evidence" value="ECO:0007669"/>
    <property type="project" value="InterPro"/>
</dbReference>
<dbReference type="GO" id="GO:0006412">
    <property type="term" value="P:translation"/>
    <property type="evidence" value="ECO:0007669"/>
    <property type="project" value="UniProtKB-UniRule"/>
</dbReference>
<dbReference type="FunFam" id="3.40.1370.10:FF:000001">
    <property type="entry name" value="50S ribosomal protein L4"/>
    <property type="match status" value="1"/>
</dbReference>
<dbReference type="Gene3D" id="3.40.1370.10">
    <property type="match status" value="1"/>
</dbReference>
<dbReference type="HAMAP" id="MF_01328_B">
    <property type="entry name" value="Ribosomal_uL4_B"/>
    <property type="match status" value="1"/>
</dbReference>
<dbReference type="InterPro" id="IPR002136">
    <property type="entry name" value="Ribosomal_uL4"/>
</dbReference>
<dbReference type="InterPro" id="IPR013005">
    <property type="entry name" value="Ribosomal_uL4-like"/>
</dbReference>
<dbReference type="InterPro" id="IPR023574">
    <property type="entry name" value="Ribosomal_uL4_dom_sf"/>
</dbReference>
<dbReference type="NCBIfam" id="TIGR03953">
    <property type="entry name" value="rplD_bact"/>
    <property type="match status" value="1"/>
</dbReference>
<dbReference type="PANTHER" id="PTHR10746">
    <property type="entry name" value="50S RIBOSOMAL PROTEIN L4"/>
    <property type="match status" value="1"/>
</dbReference>
<dbReference type="PANTHER" id="PTHR10746:SF6">
    <property type="entry name" value="LARGE RIBOSOMAL SUBUNIT PROTEIN UL4M"/>
    <property type="match status" value="1"/>
</dbReference>
<dbReference type="Pfam" id="PF00573">
    <property type="entry name" value="Ribosomal_L4"/>
    <property type="match status" value="1"/>
</dbReference>
<dbReference type="SUPFAM" id="SSF52166">
    <property type="entry name" value="Ribosomal protein L4"/>
    <property type="match status" value="1"/>
</dbReference>
<accession>Q48D37</accession>
<sequence>MQLNVNDAQAIEVSELTFGGEFNETLVHQAVVAYMAGGRQGSKQQKTRSDVRGGGKRPWRQKGTGRARAGTIRSPIWRGGGTTFAARPQDHTQKLNKKMYRAALRSILAELVRTDRLVVVQDFAVEAPKTKDLLSKLTGMGLTDVLIVSDAVDQNLYLAARNLPHVDVRDVQGSDPVSLIAYDKVLITVSAVKKFEELLG</sequence>
<reference key="1">
    <citation type="journal article" date="2005" name="J. Bacteriol.">
        <title>Whole-genome sequence analysis of Pseudomonas syringae pv. phaseolicola 1448A reveals divergence among pathovars in genes involved in virulence and transposition.</title>
        <authorList>
            <person name="Joardar V."/>
            <person name="Lindeberg M."/>
            <person name="Jackson R.W."/>
            <person name="Selengut J."/>
            <person name="Dodson R."/>
            <person name="Brinkac L.M."/>
            <person name="Daugherty S.C."/>
            <person name="DeBoy R.T."/>
            <person name="Durkin A.S."/>
            <person name="Gwinn Giglio M."/>
            <person name="Madupu R."/>
            <person name="Nelson W.C."/>
            <person name="Rosovitz M.J."/>
            <person name="Sullivan S.A."/>
            <person name="Crabtree J."/>
            <person name="Creasy T."/>
            <person name="Davidsen T.M."/>
            <person name="Haft D.H."/>
            <person name="Zafar N."/>
            <person name="Zhou L."/>
            <person name="Halpin R."/>
            <person name="Holley T."/>
            <person name="Khouri H.M."/>
            <person name="Feldblyum T.V."/>
            <person name="White O."/>
            <person name="Fraser C.M."/>
            <person name="Chatterjee A.K."/>
            <person name="Cartinhour S."/>
            <person name="Schneider D."/>
            <person name="Mansfield J.W."/>
            <person name="Collmer A."/>
            <person name="Buell R."/>
        </authorList>
    </citation>
    <scope>NUCLEOTIDE SEQUENCE [LARGE SCALE GENOMIC DNA]</scope>
    <source>
        <strain>1448A / Race 6</strain>
    </source>
</reference>
<proteinExistence type="inferred from homology"/>
<gene>
    <name evidence="1" type="primary">rplD</name>
    <name type="ordered locus">PSPPH_4591</name>
</gene>
<keyword id="KW-0687">Ribonucleoprotein</keyword>
<keyword id="KW-0689">Ribosomal protein</keyword>
<keyword id="KW-0694">RNA-binding</keyword>
<keyword id="KW-0699">rRNA-binding</keyword>
<name>RL4_PSE14</name>